<name>PFD6_DROME</name>
<reference key="1">
    <citation type="journal article" date="2000" name="Science">
        <title>The genome sequence of Drosophila melanogaster.</title>
        <authorList>
            <person name="Adams M.D."/>
            <person name="Celniker S.E."/>
            <person name="Holt R.A."/>
            <person name="Evans C.A."/>
            <person name="Gocayne J.D."/>
            <person name="Amanatides P.G."/>
            <person name="Scherer S.E."/>
            <person name="Li P.W."/>
            <person name="Hoskins R.A."/>
            <person name="Galle R.F."/>
            <person name="George R.A."/>
            <person name="Lewis S.E."/>
            <person name="Richards S."/>
            <person name="Ashburner M."/>
            <person name="Henderson S.N."/>
            <person name="Sutton G.G."/>
            <person name="Wortman J.R."/>
            <person name="Yandell M.D."/>
            <person name="Zhang Q."/>
            <person name="Chen L.X."/>
            <person name="Brandon R.C."/>
            <person name="Rogers Y.-H.C."/>
            <person name="Blazej R.G."/>
            <person name="Champe M."/>
            <person name="Pfeiffer B.D."/>
            <person name="Wan K.H."/>
            <person name="Doyle C."/>
            <person name="Baxter E.G."/>
            <person name="Helt G."/>
            <person name="Nelson C.R."/>
            <person name="Miklos G.L.G."/>
            <person name="Abril J.F."/>
            <person name="Agbayani A."/>
            <person name="An H.-J."/>
            <person name="Andrews-Pfannkoch C."/>
            <person name="Baldwin D."/>
            <person name="Ballew R.M."/>
            <person name="Basu A."/>
            <person name="Baxendale J."/>
            <person name="Bayraktaroglu L."/>
            <person name="Beasley E.M."/>
            <person name="Beeson K.Y."/>
            <person name="Benos P.V."/>
            <person name="Berman B.P."/>
            <person name="Bhandari D."/>
            <person name="Bolshakov S."/>
            <person name="Borkova D."/>
            <person name="Botchan M.R."/>
            <person name="Bouck J."/>
            <person name="Brokstein P."/>
            <person name="Brottier P."/>
            <person name="Burtis K.C."/>
            <person name="Busam D.A."/>
            <person name="Butler H."/>
            <person name="Cadieu E."/>
            <person name="Center A."/>
            <person name="Chandra I."/>
            <person name="Cherry J.M."/>
            <person name="Cawley S."/>
            <person name="Dahlke C."/>
            <person name="Davenport L.B."/>
            <person name="Davies P."/>
            <person name="de Pablos B."/>
            <person name="Delcher A."/>
            <person name="Deng Z."/>
            <person name="Mays A.D."/>
            <person name="Dew I."/>
            <person name="Dietz S.M."/>
            <person name="Dodson K."/>
            <person name="Doup L.E."/>
            <person name="Downes M."/>
            <person name="Dugan-Rocha S."/>
            <person name="Dunkov B.C."/>
            <person name="Dunn P."/>
            <person name="Durbin K.J."/>
            <person name="Evangelista C.C."/>
            <person name="Ferraz C."/>
            <person name="Ferriera S."/>
            <person name="Fleischmann W."/>
            <person name="Fosler C."/>
            <person name="Gabrielian A.E."/>
            <person name="Garg N.S."/>
            <person name="Gelbart W.M."/>
            <person name="Glasser K."/>
            <person name="Glodek A."/>
            <person name="Gong F."/>
            <person name="Gorrell J.H."/>
            <person name="Gu Z."/>
            <person name="Guan P."/>
            <person name="Harris M."/>
            <person name="Harris N.L."/>
            <person name="Harvey D.A."/>
            <person name="Heiman T.J."/>
            <person name="Hernandez J.R."/>
            <person name="Houck J."/>
            <person name="Hostin D."/>
            <person name="Houston K.A."/>
            <person name="Howland T.J."/>
            <person name="Wei M.-H."/>
            <person name="Ibegwam C."/>
            <person name="Jalali M."/>
            <person name="Kalush F."/>
            <person name="Karpen G.H."/>
            <person name="Ke Z."/>
            <person name="Kennison J.A."/>
            <person name="Ketchum K.A."/>
            <person name="Kimmel B.E."/>
            <person name="Kodira C.D."/>
            <person name="Kraft C.L."/>
            <person name="Kravitz S."/>
            <person name="Kulp D."/>
            <person name="Lai Z."/>
            <person name="Lasko P."/>
            <person name="Lei Y."/>
            <person name="Levitsky A.A."/>
            <person name="Li J.H."/>
            <person name="Li Z."/>
            <person name="Liang Y."/>
            <person name="Lin X."/>
            <person name="Liu X."/>
            <person name="Mattei B."/>
            <person name="McIntosh T.C."/>
            <person name="McLeod M.P."/>
            <person name="McPherson D."/>
            <person name="Merkulov G."/>
            <person name="Milshina N.V."/>
            <person name="Mobarry C."/>
            <person name="Morris J."/>
            <person name="Moshrefi A."/>
            <person name="Mount S.M."/>
            <person name="Moy M."/>
            <person name="Murphy B."/>
            <person name="Murphy L."/>
            <person name="Muzny D.M."/>
            <person name="Nelson D.L."/>
            <person name="Nelson D.R."/>
            <person name="Nelson K.A."/>
            <person name="Nixon K."/>
            <person name="Nusskern D.R."/>
            <person name="Pacleb J.M."/>
            <person name="Palazzolo M."/>
            <person name="Pittman G.S."/>
            <person name="Pan S."/>
            <person name="Pollard J."/>
            <person name="Puri V."/>
            <person name="Reese M.G."/>
            <person name="Reinert K."/>
            <person name="Remington K."/>
            <person name="Saunders R.D.C."/>
            <person name="Scheeler F."/>
            <person name="Shen H."/>
            <person name="Shue B.C."/>
            <person name="Siden-Kiamos I."/>
            <person name="Simpson M."/>
            <person name="Skupski M.P."/>
            <person name="Smith T.J."/>
            <person name="Spier E."/>
            <person name="Spradling A.C."/>
            <person name="Stapleton M."/>
            <person name="Strong R."/>
            <person name="Sun E."/>
            <person name="Svirskas R."/>
            <person name="Tector C."/>
            <person name="Turner R."/>
            <person name="Venter E."/>
            <person name="Wang A.H."/>
            <person name="Wang X."/>
            <person name="Wang Z.-Y."/>
            <person name="Wassarman D.A."/>
            <person name="Weinstock G.M."/>
            <person name="Weissenbach J."/>
            <person name="Williams S.M."/>
            <person name="Woodage T."/>
            <person name="Worley K.C."/>
            <person name="Wu D."/>
            <person name="Yang S."/>
            <person name="Yao Q.A."/>
            <person name="Ye J."/>
            <person name="Yeh R.-F."/>
            <person name="Zaveri J.S."/>
            <person name="Zhan M."/>
            <person name="Zhang G."/>
            <person name="Zhao Q."/>
            <person name="Zheng L."/>
            <person name="Zheng X.H."/>
            <person name="Zhong F.N."/>
            <person name="Zhong W."/>
            <person name="Zhou X."/>
            <person name="Zhu S.C."/>
            <person name="Zhu X."/>
            <person name="Smith H.O."/>
            <person name="Gibbs R.A."/>
            <person name="Myers E.W."/>
            <person name="Rubin G.M."/>
            <person name="Venter J.C."/>
        </authorList>
    </citation>
    <scope>NUCLEOTIDE SEQUENCE [LARGE SCALE GENOMIC DNA]</scope>
    <source>
        <strain>Berkeley</strain>
    </source>
</reference>
<reference key="2">
    <citation type="journal article" date="2002" name="Genome Biol.">
        <title>Annotation of the Drosophila melanogaster euchromatic genome: a systematic review.</title>
        <authorList>
            <person name="Misra S."/>
            <person name="Crosby M.A."/>
            <person name="Mungall C.J."/>
            <person name="Matthews B.B."/>
            <person name="Campbell K.S."/>
            <person name="Hradecky P."/>
            <person name="Huang Y."/>
            <person name="Kaminker J.S."/>
            <person name="Millburn G.H."/>
            <person name="Prochnik S.E."/>
            <person name="Smith C.D."/>
            <person name="Tupy J.L."/>
            <person name="Whitfield E.J."/>
            <person name="Bayraktaroglu L."/>
            <person name="Berman B.P."/>
            <person name="Bettencourt B.R."/>
            <person name="Celniker S.E."/>
            <person name="de Grey A.D.N.J."/>
            <person name="Drysdale R.A."/>
            <person name="Harris N.L."/>
            <person name="Richter J."/>
            <person name="Russo S."/>
            <person name="Schroeder A.J."/>
            <person name="Shu S.Q."/>
            <person name="Stapleton M."/>
            <person name="Yamada C."/>
            <person name="Ashburner M."/>
            <person name="Gelbart W.M."/>
            <person name="Rubin G.M."/>
            <person name="Lewis S.E."/>
        </authorList>
    </citation>
    <scope>GENOME REANNOTATION</scope>
    <source>
        <strain>Berkeley</strain>
    </source>
</reference>
<reference key="3">
    <citation type="journal article" date="2002" name="Genome Biol.">
        <title>A Drosophila full-length cDNA resource.</title>
        <authorList>
            <person name="Stapleton M."/>
            <person name="Carlson J.W."/>
            <person name="Brokstein P."/>
            <person name="Yu C."/>
            <person name="Champe M."/>
            <person name="George R.A."/>
            <person name="Guarin H."/>
            <person name="Kronmiller B."/>
            <person name="Pacleb J.M."/>
            <person name="Park S."/>
            <person name="Wan K.H."/>
            <person name="Rubin G.M."/>
            <person name="Celniker S.E."/>
        </authorList>
    </citation>
    <scope>NUCLEOTIDE SEQUENCE [LARGE SCALE MRNA]</scope>
    <source>
        <strain>Berkeley</strain>
        <tissue>Head</tissue>
    </source>
</reference>
<accession>Q9VW56</accession>
<gene>
    <name evidence="3" type="primary">Pfdn6</name>
    <name evidence="3" type="ORF">CG7770</name>
</gene>
<evidence type="ECO:0000250" key="1"/>
<evidence type="ECO:0000305" key="2"/>
<evidence type="ECO:0000312" key="3">
    <source>
        <dbReference type="FlyBase" id="FBgn0036918"/>
    </source>
</evidence>
<protein>
    <recommendedName>
        <fullName>Probable prefoldin subunit 6</fullName>
    </recommendedName>
</protein>
<sequence>MDKKSAALYKKMQAEIESYQNLQKSCLKMVKQRAVLESQLNENKCVLDELNLLGPDNKVYKLFGPVLVKQELEESRQNVGKRIEYISKELKSSTDALENMEKDMLKHRESVAKYQQQCQVAAAMQ</sequence>
<organism>
    <name type="scientific">Drosophila melanogaster</name>
    <name type="common">Fruit fly</name>
    <dbReference type="NCBI Taxonomy" id="7227"/>
    <lineage>
        <taxon>Eukaryota</taxon>
        <taxon>Metazoa</taxon>
        <taxon>Ecdysozoa</taxon>
        <taxon>Arthropoda</taxon>
        <taxon>Hexapoda</taxon>
        <taxon>Insecta</taxon>
        <taxon>Pterygota</taxon>
        <taxon>Neoptera</taxon>
        <taxon>Endopterygota</taxon>
        <taxon>Diptera</taxon>
        <taxon>Brachycera</taxon>
        <taxon>Muscomorpha</taxon>
        <taxon>Ephydroidea</taxon>
        <taxon>Drosophilidae</taxon>
        <taxon>Drosophila</taxon>
        <taxon>Sophophora</taxon>
    </lineage>
</organism>
<keyword id="KW-0143">Chaperone</keyword>
<keyword id="KW-1185">Reference proteome</keyword>
<comment type="function">
    <text evidence="1">Binds specifically to cytosolic chaperonin (c-CPN) and transfers target proteins to it. Binds to nascent polypeptide chain and promotes folding in an environment in which there are many competing pathways for nonnative proteins (By similarity).</text>
</comment>
<comment type="subunit">
    <text evidence="1">Heterohexamer of two PFD-alpha type and four PFD-beta type subunits.</text>
</comment>
<comment type="similarity">
    <text evidence="2">Belongs to the prefoldin subunit beta family.</text>
</comment>
<proteinExistence type="evidence at transcript level"/>
<feature type="chain" id="PRO_0000124853" description="Probable prefoldin subunit 6">
    <location>
        <begin position="1"/>
        <end position="125"/>
    </location>
</feature>
<dbReference type="EMBL" id="AE014296">
    <property type="protein sequence ID" value="AAF49093.1"/>
    <property type="molecule type" value="Genomic_DNA"/>
</dbReference>
<dbReference type="EMBL" id="AY118830">
    <property type="protein sequence ID" value="AAM50690.1"/>
    <property type="molecule type" value="mRNA"/>
</dbReference>
<dbReference type="RefSeq" id="NP_001262079.1">
    <property type="nucleotide sequence ID" value="NM_001275150.1"/>
</dbReference>
<dbReference type="RefSeq" id="NP_649159.1">
    <property type="nucleotide sequence ID" value="NM_140902.2"/>
</dbReference>
<dbReference type="SMR" id="Q9VW56"/>
<dbReference type="BioGRID" id="65443">
    <property type="interactions" value="11"/>
</dbReference>
<dbReference type="ComplexPortal" id="CPX-2389">
    <property type="entry name" value="Prefoldin co-chaperone complex"/>
</dbReference>
<dbReference type="DIP" id="DIP-23271N"/>
<dbReference type="FunCoup" id="Q9VW56">
    <property type="interactions" value="1776"/>
</dbReference>
<dbReference type="IntAct" id="Q9VW56">
    <property type="interactions" value="16"/>
</dbReference>
<dbReference type="STRING" id="7227.FBpp0303214"/>
<dbReference type="PaxDb" id="7227-FBpp0303214"/>
<dbReference type="DNASU" id="40176"/>
<dbReference type="EnsemblMetazoa" id="FBtr0074894">
    <property type="protein sequence ID" value="FBpp0074663"/>
    <property type="gene ID" value="FBgn0036918"/>
</dbReference>
<dbReference type="EnsemblMetazoa" id="FBtr0330181">
    <property type="protein sequence ID" value="FBpp0303214"/>
    <property type="gene ID" value="FBgn0036918"/>
</dbReference>
<dbReference type="GeneID" id="40176"/>
<dbReference type="KEGG" id="dme:Dmel_CG7770"/>
<dbReference type="UCSC" id="CG7770-RA">
    <property type="organism name" value="d. melanogaster"/>
</dbReference>
<dbReference type="AGR" id="FB:FBgn0036918"/>
<dbReference type="CTD" id="10471"/>
<dbReference type="FlyBase" id="FBgn0036918">
    <property type="gene designation" value="Pfdn6"/>
</dbReference>
<dbReference type="VEuPathDB" id="VectorBase:FBgn0036918"/>
<dbReference type="eggNOG" id="KOG3478">
    <property type="taxonomic scope" value="Eukaryota"/>
</dbReference>
<dbReference type="GeneTree" id="ENSGT00390000010512"/>
<dbReference type="HOGENOM" id="CLU_125172_0_1_1"/>
<dbReference type="InParanoid" id="Q9VW56"/>
<dbReference type="OMA" id="VQTEFAQ"/>
<dbReference type="OrthoDB" id="248120at2759"/>
<dbReference type="PhylomeDB" id="Q9VW56"/>
<dbReference type="SignaLink" id="Q9VW56"/>
<dbReference type="BioGRID-ORCS" id="40176">
    <property type="hits" value="1 hit in 1 CRISPR screen"/>
</dbReference>
<dbReference type="ChiTaRS" id="CG7770">
    <property type="organism name" value="fly"/>
</dbReference>
<dbReference type="GenomeRNAi" id="40176"/>
<dbReference type="PRO" id="PR:Q9VW56"/>
<dbReference type="Proteomes" id="UP000000803">
    <property type="component" value="Chromosome 3L"/>
</dbReference>
<dbReference type="Bgee" id="FBgn0036918">
    <property type="expression patterns" value="Expressed in adult class III enteroendocrine cell in adult midgut (Drosophila) and 184 other cell types or tissues"/>
</dbReference>
<dbReference type="ExpressionAtlas" id="Q9VW56">
    <property type="expression patterns" value="baseline and differential"/>
</dbReference>
<dbReference type="GO" id="GO:0005737">
    <property type="term" value="C:cytoplasm"/>
    <property type="evidence" value="ECO:0000318"/>
    <property type="project" value="GO_Central"/>
</dbReference>
<dbReference type="GO" id="GO:0016272">
    <property type="term" value="C:prefoldin complex"/>
    <property type="evidence" value="ECO:0000318"/>
    <property type="project" value="GO_Central"/>
</dbReference>
<dbReference type="GO" id="GO:0051087">
    <property type="term" value="F:protein-folding chaperone binding"/>
    <property type="evidence" value="ECO:0000318"/>
    <property type="project" value="GO_Central"/>
</dbReference>
<dbReference type="GO" id="GO:0051082">
    <property type="term" value="F:unfolded protein binding"/>
    <property type="evidence" value="ECO:0007669"/>
    <property type="project" value="InterPro"/>
</dbReference>
<dbReference type="GO" id="GO:0051131">
    <property type="term" value="P:chaperone-mediated protein complex assembly"/>
    <property type="evidence" value="ECO:0000318"/>
    <property type="project" value="GO_Central"/>
</dbReference>
<dbReference type="GO" id="GO:0006457">
    <property type="term" value="P:protein folding"/>
    <property type="evidence" value="ECO:0000318"/>
    <property type="project" value="GO_Central"/>
</dbReference>
<dbReference type="CDD" id="cd23161">
    <property type="entry name" value="Prefoldin_6"/>
    <property type="match status" value="1"/>
</dbReference>
<dbReference type="FunFam" id="1.10.287.370:FF:000003">
    <property type="entry name" value="Prefoldin subunit 6"/>
    <property type="match status" value="1"/>
</dbReference>
<dbReference type="Gene3D" id="1.10.287.370">
    <property type="match status" value="1"/>
</dbReference>
<dbReference type="InterPro" id="IPR002777">
    <property type="entry name" value="PFD_beta-like"/>
</dbReference>
<dbReference type="InterPro" id="IPR009053">
    <property type="entry name" value="Prefoldin"/>
</dbReference>
<dbReference type="PANTHER" id="PTHR21431">
    <property type="entry name" value="PREFOLDIN SUBUNIT 6"/>
    <property type="match status" value="1"/>
</dbReference>
<dbReference type="PANTHER" id="PTHR21431:SF0">
    <property type="entry name" value="PREFOLDIN SUBUNIT 6"/>
    <property type="match status" value="1"/>
</dbReference>
<dbReference type="Pfam" id="PF01920">
    <property type="entry name" value="Prefoldin_2"/>
    <property type="match status" value="1"/>
</dbReference>
<dbReference type="SUPFAM" id="SSF46579">
    <property type="entry name" value="Prefoldin"/>
    <property type="match status" value="1"/>
</dbReference>